<accession>Q5MZL0</accession>
<proteinExistence type="inferred from homology"/>
<comment type="similarity">
    <text evidence="1">Belongs to the bacterial ribosomal protein bS16 family.</text>
</comment>
<reference key="1">
    <citation type="journal article" date="2007" name="Photosyn. Res.">
        <title>Complete nucleotide sequence of the freshwater unicellular cyanobacterium Synechococcus elongatus PCC 6301 chromosome: gene content and organization.</title>
        <authorList>
            <person name="Sugita C."/>
            <person name="Ogata K."/>
            <person name="Shikata M."/>
            <person name="Jikuya H."/>
            <person name="Takano J."/>
            <person name="Furumichi M."/>
            <person name="Kanehisa M."/>
            <person name="Omata T."/>
            <person name="Sugiura M."/>
            <person name="Sugita M."/>
        </authorList>
    </citation>
    <scope>NUCLEOTIDE SEQUENCE [LARGE SCALE GENOMIC DNA]</scope>
    <source>
        <strain>ATCC 27144 / PCC 6301 / SAUG 1402/1</strain>
    </source>
</reference>
<evidence type="ECO:0000255" key="1">
    <source>
        <dbReference type="HAMAP-Rule" id="MF_00385"/>
    </source>
</evidence>
<evidence type="ECO:0000305" key="2"/>
<gene>
    <name evidence="1" type="primary">rpsP</name>
    <name evidence="1" type="synonym">rps16</name>
    <name type="ordered locus">syc2320_c</name>
</gene>
<feature type="chain" id="PRO_0000243881" description="Small ribosomal subunit protein bS16">
    <location>
        <begin position="1"/>
        <end position="82"/>
    </location>
</feature>
<keyword id="KW-0687">Ribonucleoprotein</keyword>
<keyword id="KW-0689">Ribosomal protein</keyword>
<organism>
    <name type="scientific">Synechococcus sp. (strain ATCC 27144 / PCC 6301 / SAUG 1402/1)</name>
    <name type="common">Anacystis nidulans</name>
    <dbReference type="NCBI Taxonomy" id="269084"/>
    <lineage>
        <taxon>Bacteria</taxon>
        <taxon>Bacillati</taxon>
        <taxon>Cyanobacteriota</taxon>
        <taxon>Cyanophyceae</taxon>
        <taxon>Synechococcales</taxon>
        <taxon>Synechococcaceae</taxon>
        <taxon>Synechococcus</taxon>
    </lineage>
</organism>
<sequence>MIKLRLKRFGKKREVSYRIVATNSTSRRDGLPLEELGFYNPRTNETRLDVPAIVRRLQQGAQPTETVRSILRKAQIFEQLKA</sequence>
<dbReference type="EMBL" id="AP008231">
    <property type="protein sequence ID" value="BAD80510.1"/>
    <property type="molecule type" value="Genomic_DNA"/>
</dbReference>
<dbReference type="RefSeq" id="WP_011244630.1">
    <property type="nucleotide sequence ID" value="NZ_CP085785.1"/>
</dbReference>
<dbReference type="SMR" id="Q5MZL0"/>
<dbReference type="GeneID" id="72430643"/>
<dbReference type="KEGG" id="syc:syc2320_c"/>
<dbReference type="eggNOG" id="COG0228">
    <property type="taxonomic scope" value="Bacteria"/>
</dbReference>
<dbReference type="Proteomes" id="UP000001175">
    <property type="component" value="Chromosome"/>
</dbReference>
<dbReference type="GO" id="GO:0005737">
    <property type="term" value="C:cytoplasm"/>
    <property type="evidence" value="ECO:0007669"/>
    <property type="project" value="UniProtKB-ARBA"/>
</dbReference>
<dbReference type="GO" id="GO:0015935">
    <property type="term" value="C:small ribosomal subunit"/>
    <property type="evidence" value="ECO:0007669"/>
    <property type="project" value="TreeGrafter"/>
</dbReference>
<dbReference type="GO" id="GO:0003735">
    <property type="term" value="F:structural constituent of ribosome"/>
    <property type="evidence" value="ECO:0007669"/>
    <property type="project" value="InterPro"/>
</dbReference>
<dbReference type="GO" id="GO:0006412">
    <property type="term" value="P:translation"/>
    <property type="evidence" value="ECO:0007669"/>
    <property type="project" value="UniProtKB-UniRule"/>
</dbReference>
<dbReference type="FunFam" id="3.30.1320.10:FF:000016">
    <property type="entry name" value="30S ribosomal protein S16"/>
    <property type="match status" value="1"/>
</dbReference>
<dbReference type="Gene3D" id="3.30.1320.10">
    <property type="match status" value="1"/>
</dbReference>
<dbReference type="HAMAP" id="MF_00385">
    <property type="entry name" value="Ribosomal_bS16"/>
    <property type="match status" value="1"/>
</dbReference>
<dbReference type="InterPro" id="IPR000307">
    <property type="entry name" value="Ribosomal_bS16"/>
</dbReference>
<dbReference type="InterPro" id="IPR020592">
    <property type="entry name" value="Ribosomal_bS16_CS"/>
</dbReference>
<dbReference type="InterPro" id="IPR023803">
    <property type="entry name" value="Ribosomal_bS16_dom_sf"/>
</dbReference>
<dbReference type="NCBIfam" id="TIGR00002">
    <property type="entry name" value="S16"/>
    <property type="match status" value="1"/>
</dbReference>
<dbReference type="PANTHER" id="PTHR12919">
    <property type="entry name" value="30S RIBOSOMAL PROTEIN S16"/>
    <property type="match status" value="1"/>
</dbReference>
<dbReference type="PANTHER" id="PTHR12919:SF20">
    <property type="entry name" value="SMALL RIBOSOMAL SUBUNIT PROTEIN BS16M"/>
    <property type="match status" value="1"/>
</dbReference>
<dbReference type="Pfam" id="PF00886">
    <property type="entry name" value="Ribosomal_S16"/>
    <property type="match status" value="1"/>
</dbReference>
<dbReference type="SUPFAM" id="SSF54565">
    <property type="entry name" value="Ribosomal protein S16"/>
    <property type="match status" value="1"/>
</dbReference>
<dbReference type="PROSITE" id="PS00732">
    <property type="entry name" value="RIBOSOMAL_S16"/>
    <property type="match status" value="1"/>
</dbReference>
<name>RS16_SYNP6</name>
<protein>
    <recommendedName>
        <fullName evidence="1">Small ribosomal subunit protein bS16</fullName>
    </recommendedName>
    <alternativeName>
        <fullName evidence="2">30S ribosomal protein S16</fullName>
    </alternativeName>
</protein>